<dbReference type="EC" id="5.3.3.2" evidence="1"/>
<dbReference type="EMBL" id="CP000108">
    <property type="protein sequence ID" value="ABB28701.1"/>
    <property type="molecule type" value="Genomic_DNA"/>
</dbReference>
<dbReference type="SMR" id="Q3AQM4"/>
<dbReference type="STRING" id="340177.Cag_1445"/>
<dbReference type="KEGG" id="cch:Cag_1445"/>
<dbReference type="eggNOG" id="COG1304">
    <property type="taxonomic scope" value="Bacteria"/>
</dbReference>
<dbReference type="HOGENOM" id="CLU_065515_1_0_10"/>
<dbReference type="OrthoDB" id="9795032at2"/>
<dbReference type="GO" id="GO:0005737">
    <property type="term" value="C:cytoplasm"/>
    <property type="evidence" value="ECO:0007669"/>
    <property type="project" value="UniProtKB-SubCell"/>
</dbReference>
<dbReference type="GO" id="GO:0010181">
    <property type="term" value="F:FMN binding"/>
    <property type="evidence" value="ECO:0007669"/>
    <property type="project" value="UniProtKB-UniRule"/>
</dbReference>
<dbReference type="GO" id="GO:0004452">
    <property type="term" value="F:isopentenyl-diphosphate delta-isomerase activity"/>
    <property type="evidence" value="ECO:0007669"/>
    <property type="project" value="UniProtKB-UniRule"/>
</dbReference>
<dbReference type="GO" id="GO:0000287">
    <property type="term" value="F:magnesium ion binding"/>
    <property type="evidence" value="ECO:0007669"/>
    <property type="project" value="UniProtKB-UniRule"/>
</dbReference>
<dbReference type="GO" id="GO:0070402">
    <property type="term" value="F:NADPH binding"/>
    <property type="evidence" value="ECO:0007669"/>
    <property type="project" value="UniProtKB-UniRule"/>
</dbReference>
<dbReference type="GO" id="GO:0016627">
    <property type="term" value="F:oxidoreductase activity, acting on the CH-CH group of donors"/>
    <property type="evidence" value="ECO:0007669"/>
    <property type="project" value="InterPro"/>
</dbReference>
<dbReference type="GO" id="GO:0006207">
    <property type="term" value="P:'de novo' pyrimidine nucleobase biosynthetic process"/>
    <property type="evidence" value="ECO:0007669"/>
    <property type="project" value="InterPro"/>
</dbReference>
<dbReference type="GO" id="GO:0008299">
    <property type="term" value="P:isoprenoid biosynthetic process"/>
    <property type="evidence" value="ECO:0007669"/>
    <property type="project" value="UniProtKB-UniRule"/>
</dbReference>
<dbReference type="CDD" id="cd02811">
    <property type="entry name" value="IDI-2_FMN"/>
    <property type="match status" value="1"/>
</dbReference>
<dbReference type="Gene3D" id="3.20.20.70">
    <property type="entry name" value="Aldolase class I"/>
    <property type="match status" value="1"/>
</dbReference>
<dbReference type="HAMAP" id="MF_00354">
    <property type="entry name" value="Idi_2"/>
    <property type="match status" value="1"/>
</dbReference>
<dbReference type="InterPro" id="IPR013785">
    <property type="entry name" value="Aldolase_TIM"/>
</dbReference>
<dbReference type="InterPro" id="IPR001295">
    <property type="entry name" value="Dihydroorotate_DH_CS"/>
</dbReference>
<dbReference type="InterPro" id="IPR000262">
    <property type="entry name" value="FMN-dep_DH"/>
</dbReference>
<dbReference type="InterPro" id="IPR011179">
    <property type="entry name" value="IPdP_isomerase"/>
</dbReference>
<dbReference type="NCBIfam" id="TIGR02151">
    <property type="entry name" value="IPP_isom_2"/>
    <property type="match status" value="1"/>
</dbReference>
<dbReference type="PANTHER" id="PTHR43665">
    <property type="entry name" value="ISOPENTENYL-DIPHOSPHATE DELTA-ISOMERASE"/>
    <property type="match status" value="1"/>
</dbReference>
<dbReference type="PANTHER" id="PTHR43665:SF1">
    <property type="entry name" value="ISOPENTENYL-DIPHOSPHATE DELTA-ISOMERASE"/>
    <property type="match status" value="1"/>
</dbReference>
<dbReference type="Pfam" id="PF01070">
    <property type="entry name" value="FMN_dh"/>
    <property type="match status" value="2"/>
</dbReference>
<dbReference type="PIRSF" id="PIRSF003314">
    <property type="entry name" value="IPP_isomerase"/>
    <property type="match status" value="1"/>
</dbReference>
<dbReference type="SMART" id="SM01240">
    <property type="entry name" value="IMPDH"/>
    <property type="match status" value="1"/>
</dbReference>
<dbReference type="SUPFAM" id="SSF51395">
    <property type="entry name" value="FMN-linked oxidoreductases"/>
    <property type="match status" value="1"/>
</dbReference>
<feature type="chain" id="PRO_0000229502" description="Isopentenyl-diphosphate delta-isomerase">
    <location>
        <begin position="1"/>
        <end position="357"/>
    </location>
</feature>
<feature type="binding site" evidence="1">
    <location>
        <begin position="13"/>
        <end position="14"/>
    </location>
    <ligand>
        <name>substrate</name>
    </ligand>
</feature>
<feature type="binding site" evidence="1">
    <location>
        <position position="71"/>
    </location>
    <ligand>
        <name>FMN</name>
        <dbReference type="ChEBI" id="CHEBI:58210"/>
    </ligand>
</feature>
<feature type="binding site" evidence="1">
    <location>
        <begin position="72"/>
        <end position="74"/>
    </location>
    <ligand>
        <name>FMN</name>
        <dbReference type="ChEBI" id="CHEBI:58210"/>
    </ligand>
</feature>
<feature type="binding site" evidence="1">
    <location>
        <begin position="102"/>
        <end position="104"/>
    </location>
    <ligand>
        <name>substrate</name>
    </ligand>
</feature>
<feature type="binding site" evidence="1">
    <location>
        <position position="102"/>
    </location>
    <ligand>
        <name>FMN</name>
        <dbReference type="ChEBI" id="CHEBI:58210"/>
    </ligand>
</feature>
<feature type="binding site" evidence="1">
    <location>
        <position position="131"/>
    </location>
    <ligand>
        <name>FMN</name>
        <dbReference type="ChEBI" id="CHEBI:58210"/>
    </ligand>
</feature>
<feature type="binding site" evidence="1">
    <location>
        <position position="166"/>
    </location>
    <ligand>
        <name>substrate</name>
    </ligand>
</feature>
<feature type="binding site" evidence="1">
    <location>
        <position position="167"/>
    </location>
    <ligand>
        <name>Mg(2+)</name>
        <dbReference type="ChEBI" id="CHEBI:18420"/>
    </ligand>
</feature>
<feature type="binding site" evidence="1">
    <location>
        <position position="198"/>
    </location>
    <ligand>
        <name>FMN</name>
        <dbReference type="ChEBI" id="CHEBI:58210"/>
    </ligand>
</feature>
<feature type="binding site" evidence="1">
    <location>
        <begin position="311"/>
        <end position="312"/>
    </location>
    <ligand>
        <name>FMN</name>
        <dbReference type="ChEBI" id="CHEBI:58210"/>
    </ligand>
</feature>
<sequence length="357" mass="38580">MTNPSAGTLTIERKQSHVELCLHANVAFSGKTTGFERFYFEHNALPEIAFAEIDCSTTFLGRHIGAPLMVSSMTGGYSEASTLNRQLAEAAEHFQIPLGVGSMRQTLESPLHRESFAVTRKYAPTTLLFANIGAPEVAQGLSQSDVAMMLDLLRADGLIVHLNAAQELFQPEGNTNFHRVLEEIHNLCATTNVPIIVKEVGNGIGAAVAEQLMEAGVQALDVAGAGGISWQKVEEYRFLQQFGHEHRFSSNALDELLNWGIPTTNCLLDIAELKRLQPQFQQIEIIASGGVSSGMDVAKSLAMGAQLAASARHLLHALHAGTLTATIEQWLNDLKAAMFLTGAATVDALRTKSLLNH</sequence>
<keyword id="KW-0963">Cytoplasm</keyword>
<keyword id="KW-0285">Flavoprotein</keyword>
<keyword id="KW-0288">FMN</keyword>
<keyword id="KW-0413">Isomerase</keyword>
<keyword id="KW-0414">Isoprene biosynthesis</keyword>
<keyword id="KW-0460">Magnesium</keyword>
<keyword id="KW-0479">Metal-binding</keyword>
<keyword id="KW-0521">NADP</keyword>
<evidence type="ECO:0000255" key="1">
    <source>
        <dbReference type="HAMAP-Rule" id="MF_00354"/>
    </source>
</evidence>
<comment type="function">
    <text evidence="1">Involved in the biosynthesis of isoprenoids. Catalyzes the 1,3-allylic rearrangement of the homoallylic substrate isopentenyl (IPP) to its allylic isomer, dimethylallyl diphosphate (DMAPP).</text>
</comment>
<comment type="catalytic activity">
    <reaction evidence="1">
        <text>isopentenyl diphosphate = dimethylallyl diphosphate</text>
        <dbReference type="Rhea" id="RHEA:23284"/>
        <dbReference type="ChEBI" id="CHEBI:57623"/>
        <dbReference type="ChEBI" id="CHEBI:128769"/>
        <dbReference type="EC" id="5.3.3.2"/>
    </reaction>
</comment>
<comment type="cofactor">
    <cofactor evidence="1">
        <name>FMN</name>
        <dbReference type="ChEBI" id="CHEBI:58210"/>
    </cofactor>
</comment>
<comment type="cofactor">
    <cofactor evidence="1">
        <name>NADPH</name>
        <dbReference type="ChEBI" id="CHEBI:57783"/>
    </cofactor>
</comment>
<comment type="cofactor">
    <cofactor evidence="1">
        <name>Mg(2+)</name>
        <dbReference type="ChEBI" id="CHEBI:18420"/>
    </cofactor>
</comment>
<comment type="subunit">
    <text evidence="1">Homooctamer. Dimer of tetramers.</text>
</comment>
<comment type="subcellular location">
    <subcellularLocation>
        <location evidence="1">Cytoplasm</location>
    </subcellularLocation>
</comment>
<comment type="similarity">
    <text evidence="1">Belongs to the IPP isomerase type 2 family.</text>
</comment>
<proteinExistence type="inferred from homology"/>
<gene>
    <name evidence="1" type="primary">fni</name>
    <name type="ordered locus">Cag_1445</name>
</gene>
<accession>Q3AQM4</accession>
<name>IDI2_CHLCH</name>
<organism>
    <name type="scientific">Chlorobium chlorochromatii (strain CaD3)</name>
    <dbReference type="NCBI Taxonomy" id="340177"/>
    <lineage>
        <taxon>Bacteria</taxon>
        <taxon>Pseudomonadati</taxon>
        <taxon>Chlorobiota</taxon>
        <taxon>Chlorobiia</taxon>
        <taxon>Chlorobiales</taxon>
        <taxon>Chlorobiaceae</taxon>
        <taxon>Chlorobium/Pelodictyon group</taxon>
        <taxon>Chlorobium</taxon>
    </lineage>
</organism>
<protein>
    <recommendedName>
        <fullName evidence="1">Isopentenyl-diphosphate delta-isomerase</fullName>
        <shortName evidence="1">IPP isomerase</shortName>
        <ecNumber evidence="1">5.3.3.2</ecNumber>
    </recommendedName>
    <alternativeName>
        <fullName evidence="1">Isopentenyl diphosphate:dimethylallyl diphosphate isomerase</fullName>
    </alternativeName>
    <alternativeName>
        <fullName evidence="1">Isopentenyl pyrophosphate isomerase</fullName>
    </alternativeName>
    <alternativeName>
        <fullName evidence="1">Type 2 isopentenyl diphosphate isomerase</fullName>
        <shortName evidence="1">IDI-2</shortName>
    </alternativeName>
</protein>
<reference key="1">
    <citation type="submission" date="2005-08" db="EMBL/GenBank/DDBJ databases">
        <title>Complete sequence of Chlorobium chlorochromatii CaD3.</title>
        <authorList>
            <consortium name="US DOE Joint Genome Institute"/>
            <person name="Copeland A."/>
            <person name="Lucas S."/>
            <person name="Lapidus A."/>
            <person name="Barry K."/>
            <person name="Detter J.C."/>
            <person name="Glavina T."/>
            <person name="Hammon N."/>
            <person name="Israni S."/>
            <person name="Pitluck S."/>
            <person name="Bryant D."/>
            <person name="Schmutz J."/>
            <person name="Larimer F."/>
            <person name="Land M."/>
            <person name="Kyrpides N."/>
            <person name="Ivanova N."/>
            <person name="Richardson P."/>
        </authorList>
    </citation>
    <scope>NUCLEOTIDE SEQUENCE [LARGE SCALE GENOMIC DNA]</scope>
    <source>
        <strain>CaD3</strain>
    </source>
</reference>